<name>GCSP_XANAC</name>
<protein>
    <recommendedName>
        <fullName evidence="1">Glycine dehydrogenase (decarboxylating)</fullName>
        <ecNumber evidence="1">1.4.4.2</ecNumber>
    </recommendedName>
    <alternativeName>
        <fullName evidence="1">Glycine cleavage system P-protein</fullName>
    </alternativeName>
    <alternativeName>
        <fullName evidence="1">Glycine decarboxylase</fullName>
    </alternativeName>
    <alternativeName>
        <fullName evidence="1">Glycine dehydrogenase (aminomethyl-transferring)</fullName>
    </alternativeName>
</protein>
<keyword id="KW-0560">Oxidoreductase</keyword>
<keyword id="KW-0663">Pyridoxal phosphate</keyword>
<evidence type="ECO:0000255" key="1">
    <source>
        <dbReference type="HAMAP-Rule" id="MF_00711"/>
    </source>
</evidence>
<dbReference type="EC" id="1.4.4.2" evidence="1"/>
<dbReference type="EMBL" id="AE008923">
    <property type="protein sequence ID" value="AAM36086.1"/>
    <property type="molecule type" value="Genomic_DNA"/>
</dbReference>
<dbReference type="SMR" id="Q8PN59"/>
<dbReference type="KEGG" id="xac:XAC1214"/>
<dbReference type="eggNOG" id="COG0403">
    <property type="taxonomic scope" value="Bacteria"/>
</dbReference>
<dbReference type="eggNOG" id="COG1003">
    <property type="taxonomic scope" value="Bacteria"/>
</dbReference>
<dbReference type="HOGENOM" id="CLU_004620_1_1_6"/>
<dbReference type="Proteomes" id="UP000000576">
    <property type="component" value="Chromosome"/>
</dbReference>
<dbReference type="GO" id="GO:0005829">
    <property type="term" value="C:cytosol"/>
    <property type="evidence" value="ECO:0007669"/>
    <property type="project" value="TreeGrafter"/>
</dbReference>
<dbReference type="GO" id="GO:0005960">
    <property type="term" value="C:glycine cleavage complex"/>
    <property type="evidence" value="ECO:0007669"/>
    <property type="project" value="TreeGrafter"/>
</dbReference>
<dbReference type="GO" id="GO:0016594">
    <property type="term" value="F:glycine binding"/>
    <property type="evidence" value="ECO:0007669"/>
    <property type="project" value="TreeGrafter"/>
</dbReference>
<dbReference type="GO" id="GO:0004375">
    <property type="term" value="F:glycine dehydrogenase (decarboxylating) activity"/>
    <property type="evidence" value="ECO:0007669"/>
    <property type="project" value="UniProtKB-EC"/>
</dbReference>
<dbReference type="GO" id="GO:0030170">
    <property type="term" value="F:pyridoxal phosphate binding"/>
    <property type="evidence" value="ECO:0007669"/>
    <property type="project" value="TreeGrafter"/>
</dbReference>
<dbReference type="GO" id="GO:0019464">
    <property type="term" value="P:glycine decarboxylation via glycine cleavage system"/>
    <property type="evidence" value="ECO:0007669"/>
    <property type="project" value="UniProtKB-UniRule"/>
</dbReference>
<dbReference type="CDD" id="cd00613">
    <property type="entry name" value="GDC-P"/>
    <property type="match status" value="2"/>
</dbReference>
<dbReference type="FunFam" id="3.40.640.10:FF:000005">
    <property type="entry name" value="Glycine dehydrogenase (decarboxylating), mitochondrial"/>
    <property type="match status" value="1"/>
</dbReference>
<dbReference type="FunFam" id="3.90.1150.10:FF:000007">
    <property type="entry name" value="Glycine dehydrogenase (decarboxylating), mitochondrial"/>
    <property type="match status" value="1"/>
</dbReference>
<dbReference type="FunFam" id="3.40.640.10:FF:000007">
    <property type="entry name" value="glycine dehydrogenase (Decarboxylating), mitochondrial"/>
    <property type="match status" value="1"/>
</dbReference>
<dbReference type="Gene3D" id="3.90.1150.10">
    <property type="entry name" value="Aspartate Aminotransferase, domain 1"/>
    <property type="match status" value="2"/>
</dbReference>
<dbReference type="Gene3D" id="3.40.640.10">
    <property type="entry name" value="Type I PLP-dependent aspartate aminotransferase-like (Major domain)"/>
    <property type="match status" value="2"/>
</dbReference>
<dbReference type="HAMAP" id="MF_00711">
    <property type="entry name" value="GcvP"/>
    <property type="match status" value="1"/>
</dbReference>
<dbReference type="InterPro" id="IPR003437">
    <property type="entry name" value="GcvP"/>
</dbReference>
<dbReference type="InterPro" id="IPR049316">
    <property type="entry name" value="GDC-P_C"/>
</dbReference>
<dbReference type="InterPro" id="IPR049315">
    <property type="entry name" value="GDC-P_N"/>
</dbReference>
<dbReference type="InterPro" id="IPR020581">
    <property type="entry name" value="GDC_P"/>
</dbReference>
<dbReference type="InterPro" id="IPR015424">
    <property type="entry name" value="PyrdxlP-dep_Trfase"/>
</dbReference>
<dbReference type="InterPro" id="IPR015421">
    <property type="entry name" value="PyrdxlP-dep_Trfase_major"/>
</dbReference>
<dbReference type="InterPro" id="IPR015422">
    <property type="entry name" value="PyrdxlP-dep_Trfase_small"/>
</dbReference>
<dbReference type="NCBIfam" id="TIGR00461">
    <property type="entry name" value="gcvP"/>
    <property type="match status" value="1"/>
</dbReference>
<dbReference type="NCBIfam" id="NF003346">
    <property type="entry name" value="PRK04366.1"/>
    <property type="match status" value="1"/>
</dbReference>
<dbReference type="PANTHER" id="PTHR11773:SF1">
    <property type="entry name" value="GLYCINE DEHYDROGENASE (DECARBOXYLATING), MITOCHONDRIAL"/>
    <property type="match status" value="1"/>
</dbReference>
<dbReference type="PANTHER" id="PTHR11773">
    <property type="entry name" value="GLYCINE DEHYDROGENASE, DECARBOXYLATING"/>
    <property type="match status" value="1"/>
</dbReference>
<dbReference type="Pfam" id="PF21478">
    <property type="entry name" value="GcvP2_C"/>
    <property type="match status" value="1"/>
</dbReference>
<dbReference type="Pfam" id="PF02347">
    <property type="entry name" value="GDC-P"/>
    <property type="match status" value="2"/>
</dbReference>
<dbReference type="SUPFAM" id="SSF53383">
    <property type="entry name" value="PLP-dependent transferases"/>
    <property type="match status" value="2"/>
</dbReference>
<proteinExistence type="inferred from homology"/>
<sequence>MSQTPSSLRDLEHHSAFVERHIGPNDAEIAQMLDVVGHASLDALTDAIVPGNIKSPAPLALPEAITEEEALAKIRAIASKNQVQRNFIGQGYYGTHTPKVILRNILENPAWYTAYTPYQAEISQGRMEALINFQTLCADLTGMQIANASLLDEATAAAEAMTLAKRSAKSKSNTFFVHDAVHPQTLELLRTRAEPLDIVLRVGTPEEALQAECFGVLLQYPDSFGHIGDHAALADAVHAQGGLVAVATDLLALTLIAAPGEWGADIVVGNSQRFGVPFGFGGPHAAFMACRDAYKRSMPGRLIGVSIDAAGNPAYRLTLQTREQHIRREKATSNICTAQVLLAVMASMYAVYHGPDGLVRIARRTHRLAAILAAALRSAGVSVGDRFFDTLHVKAIDADAIHARARAAGINLRAIDSEAVGISLDETTTRADVVALAQLFGATADVDALDAATADALPQGLLRTTPFLTHPVFNTHHSEHELLRYMRSLADKDLAMDRTMIPLGSCTMKLNATAEMIPVTWPEFGAIHPLAPAEQSAGYAQLIDELEAMLVECTGYDAVSLQPNSGAQGEYAGLLAIRAYHRSRGQAHRDICLIPESAHGTNPASAQMCGMTVVVTKCDANGNVDVDDIRAKAEKYSDRLAALMITYPSTHGVFEEDVVAICEAVHAHGGQVYTDGANMNALVGVAKPGKWGSDVSHLNLHKTFCIPHGGGGPGVGPCAVKSHLAPYLPRAGIHAGEGQTAAIHGGGFNSESGNGHSSRIGGMVSAAAYGSASILPISWMYVTMMGSAGLRKATQVALLNANYIAKRLAPHYKTLYTGRNGLVAHECILDVRPLEKTSGIGAEDIAKRLIDFGFHAPTLSFPVAGTLMVEPTESESQHELDRFIDAMIQIREEIRAIEDGRLDREDNPLKHAPHTATQVSASEWTHAYPRELAAFPLPSLKQQKYWPPVARVDNVYGDKNVMCACIPVDAYKEDAEA</sequence>
<feature type="chain" id="PRO_0000166948" description="Glycine dehydrogenase (decarboxylating)">
    <location>
        <begin position="1"/>
        <end position="977"/>
    </location>
</feature>
<feature type="modified residue" description="N6-(pyridoxal phosphate)lysine" evidence="1">
    <location>
        <position position="702"/>
    </location>
</feature>
<accession>Q8PN59</accession>
<organism>
    <name type="scientific">Xanthomonas axonopodis pv. citri (strain 306)</name>
    <dbReference type="NCBI Taxonomy" id="190486"/>
    <lineage>
        <taxon>Bacteria</taxon>
        <taxon>Pseudomonadati</taxon>
        <taxon>Pseudomonadota</taxon>
        <taxon>Gammaproteobacteria</taxon>
        <taxon>Lysobacterales</taxon>
        <taxon>Lysobacteraceae</taxon>
        <taxon>Xanthomonas</taxon>
    </lineage>
</organism>
<reference key="1">
    <citation type="journal article" date="2002" name="Nature">
        <title>Comparison of the genomes of two Xanthomonas pathogens with differing host specificities.</title>
        <authorList>
            <person name="da Silva A.C.R."/>
            <person name="Ferro J.A."/>
            <person name="Reinach F.C."/>
            <person name="Farah C.S."/>
            <person name="Furlan L.R."/>
            <person name="Quaggio R.B."/>
            <person name="Monteiro-Vitorello C.B."/>
            <person name="Van Sluys M.A."/>
            <person name="Almeida N.F. Jr."/>
            <person name="Alves L.M.C."/>
            <person name="do Amaral A.M."/>
            <person name="Bertolini M.C."/>
            <person name="Camargo L.E.A."/>
            <person name="Camarotte G."/>
            <person name="Cannavan F."/>
            <person name="Cardozo J."/>
            <person name="Chambergo F."/>
            <person name="Ciapina L.P."/>
            <person name="Cicarelli R.M.B."/>
            <person name="Coutinho L.L."/>
            <person name="Cursino-Santos J.R."/>
            <person name="El-Dorry H."/>
            <person name="Faria J.B."/>
            <person name="Ferreira A.J.S."/>
            <person name="Ferreira R.C.C."/>
            <person name="Ferro M.I.T."/>
            <person name="Formighieri E.F."/>
            <person name="Franco M.C."/>
            <person name="Greggio C.C."/>
            <person name="Gruber A."/>
            <person name="Katsuyama A.M."/>
            <person name="Kishi L.T."/>
            <person name="Leite R.P."/>
            <person name="Lemos E.G.M."/>
            <person name="Lemos M.V.F."/>
            <person name="Locali E.C."/>
            <person name="Machado M.A."/>
            <person name="Madeira A.M.B.N."/>
            <person name="Martinez-Rossi N.M."/>
            <person name="Martins E.C."/>
            <person name="Meidanis J."/>
            <person name="Menck C.F.M."/>
            <person name="Miyaki C.Y."/>
            <person name="Moon D.H."/>
            <person name="Moreira L.M."/>
            <person name="Novo M.T.M."/>
            <person name="Okura V.K."/>
            <person name="Oliveira M.C."/>
            <person name="Oliveira V.R."/>
            <person name="Pereira H.A."/>
            <person name="Rossi A."/>
            <person name="Sena J.A.D."/>
            <person name="Silva C."/>
            <person name="de Souza R.F."/>
            <person name="Spinola L.A.F."/>
            <person name="Takita M.A."/>
            <person name="Tamura R.E."/>
            <person name="Teixeira E.C."/>
            <person name="Tezza R.I.D."/>
            <person name="Trindade dos Santos M."/>
            <person name="Truffi D."/>
            <person name="Tsai S.M."/>
            <person name="White F.F."/>
            <person name="Setubal J.C."/>
            <person name="Kitajima J.P."/>
        </authorList>
    </citation>
    <scope>NUCLEOTIDE SEQUENCE [LARGE SCALE GENOMIC DNA]</scope>
    <source>
        <strain>306</strain>
    </source>
</reference>
<gene>
    <name evidence="1" type="primary">gcvP</name>
    <name type="ordered locus">XAC1214</name>
</gene>
<comment type="function">
    <text evidence="1">The glycine cleavage system catalyzes the degradation of glycine. The P protein binds the alpha-amino group of glycine through its pyridoxal phosphate cofactor; CO(2) is released and the remaining methylamine moiety is then transferred to the lipoamide cofactor of the H protein.</text>
</comment>
<comment type="catalytic activity">
    <reaction evidence="1">
        <text>N(6)-[(R)-lipoyl]-L-lysyl-[glycine-cleavage complex H protein] + glycine + H(+) = N(6)-[(R)-S(8)-aminomethyldihydrolipoyl]-L-lysyl-[glycine-cleavage complex H protein] + CO2</text>
        <dbReference type="Rhea" id="RHEA:24304"/>
        <dbReference type="Rhea" id="RHEA-COMP:10494"/>
        <dbReference type="Rhea" id="RHEA-COMP:10495"/>
        <dbReference type="ChEBI" id="CHEBI:15378"/>
        <dbReference type="ChEBI" id="CHEBI:16526"/>
        <dbReference type="ChEBI" id="CHEBI:57305"/>
        <dbReference type="ChEBI" id="CHEBI:83099"/>
        <dbReference type="ChEBI" id="CHEBI:83143"/>
        <dbReference type="EC" id="1.4.4.2"/>
    </reaction>
</comment>
<comment type="cofactor">
    <cofactor evidence="1">
        <name>pyridoxal 5'-phosphate</name>
        <dbReference type="ChEBI" id="CHEBI:597326"/>
    </cofactor>
</comment>
<comment type="subunit">
    <text evidence="1">The glycine cleavage system is composed of four proteins: P, T, L and H.</text>
</comment>
<comment type="similarity">
    <text evidence="1">Belongs to the GcvP family.</text>
</comment>